<proteinExistence type="evidence at transcript level"/>
<evidence type="ECO:0000250" key="1"/>
<evidence type="ECO:0000305" key="2"/>
<keyword id="KW-0158">Chromosome</keyword>
<keyword id="KW-0217">Developmental protein</keyword>
<keyword id="KW-0221">Differentiation</keyword>
<keyword id="KW-0226">DNA condensation</keyword>
<keyword id="KW-0238">DNA-binding</keyword>
<keyword id="KW-0544">Nucleosome core</keyword>
<keyword id="KW-0539">Nucleus</keyword>
<keyword id="KW-0744">Spermatogenesis</keyword>
<sequence>MARYRCCRSRSRCRRRRRRCYRRRRRCCRRRRRRVCCRRYTVIRCRRR</sequence>
<reference key="1">
    <citation type="journal article" date="2002" name="Mol. Phylogenet. Evol.">
        <title>Characterization and phylogenetic utility of the mammalian protamine P1 gene.</title>
        <authorList>
            <person name="Van Den Bussche R.A."/>
            <person name="Hoofer S.R."/>
            <person name="Hansen E.W."/>
        </authorList>
    </citation>
    <scope>NUCLEOTIDE SEQUENCE [GENOMIC DNA]</scope>
</reference>
<accession>Q8WMC7</accession>
<organism>
    <name type="scientific">Neoeptesicus brasiliensis</name>
    <name type="common">Brazilian brown bat</name>
    <name type="synonym">Eptesicus brasiliensis</name>
    <dbReference type="NCBI Taxonomy" id="3371120"/>
    <lineage>
        <taxon>Eukaryota</taxon>
        <taxon>Metazoa</taxon>
        <taxon>Chordata</taxon>
        <taxon>Craniata</taxon>
        <taxon>Vertebrata</taxon>
        <taxon>Euteleostomi</taxon>
        <taxon>Mammalia</taxon>
        <taxon>Eutheria</taxon>
        <taxon>Laurasiatheria</taxon>
        <taxon>Chiroptera</taxon>
        <taxon>Yangochiroptera</taxon>
        <taxon>Vespertilionidae</taxon>
        <taxon>Neoeptesicus</taxon>
    </lineage>
</organism>
<gene>
    <name type="primary">PRM1</name>
</gene>
<comment type="function">
    <text evidence="1">Protamines substitute for histones in the chromatin of sperm during the haploid phase of spermatogenesis. They compact sperm DNA into a highly condensed, stable and inactive complex (By similarity).</text>
</comment>
<comment type="subcellular location">
    <subcellularLocation>
        <location evidence="1">Nucleus</location>
    </subcellularLocation>
    <subcellularLocation>
        <location evidence="1">Chromosome</location>
    </subcellularLocation>
</comment>
<comment type="tissue specificity">
    <text>Testis.</text>
</comment>
<comment type="similarity">
    <text evidence="2">Belongs to the protamine P1 family.</text>
</comment>
<protein>
    <recommendedName>
        <fullName>Sperm protamine P1</fullName>
    </recommendedName>
</protein>
<feature type="chain" id="PRO_0000191476" description="Sperm protamine P1">
    <location>
        <begin position="1"/>
        <end position="48"/>
    </location>
</feature>
<name>HSP1_NEOBA</name>
<dbReference type="EMBL" id="AF435943">
    <property type="protein sequence ID" value="AAL35577.1"/>
    <property type="molecule type" value="Genomic_DNA"/>
</dbReference>
<dbReference type="GO" id="GO:0000786">
    <property type="term" value="C:nucleosome"/>
    <property type="evidence" value="ECO:0007669"/>
    <property type="project" value="UniProtKB-KW"/>
</dbReference>
<dbReference type="GO" id="GO:0005634">
    <property type="term" value="C:nucleus"/>
    <property type="evidence" value="ECO:0007669"/>
    <property type="project" value="UniProtKB-SubCell"/>
</dbReference>
<dbReference type="GO" id="GO:0003677">
    <property type="term" value="F:DNA binding"/>
    <property type="evidence" value="ECO:0007669"/>
    <property type="project" value="UniProtKB-KW"/>
</dbReference>
<dbReference type="GO" id="GO:0030261">
    <property type="term" value="P:chromosome condensation"/>
    <property type="evidence" value="ECO:0007669"/>
    <property type="project" value="UniProtKB-KW"/>
</dbReference>
<dbReference type="GO" id="GO:0035092">
    <property type="term" value="P:sperm DNA condensation"/>
    <property type="evidence" value="ECO:0007669"/>
    <property type="project" value="InterPro"/>
</dbReference>
<dbReference type="InterPro" id="IPR000221">
    <property type="entry name" value="Protamine_P1"/>
</dbReference>
<dbReference type="Pfam" id="PF00260">
    <property type="entry name" value="Protamine_P1"/>
    <property type="match status" value="1"/>
</dbReference>